<dbReference type="EMBL" id="CP000463">
    <property type="protein sequence ID" value="ABJ07503.1"/>
    <property type="molecule type" value="Genomic_DNA"/>
</dbReference>
<dbReference type="SMR" id="Q07KN1"/>
<dbReference type="STRING" id="316055.RPE_3573"/>
<dbReference type="KEGG" id="rpe:RPE_3573"/>
<dbReference type="eggNOG" id="COG0199">
    <property type="taxonomic scope" value="Bacteria"/>
</dbReference>
<dbReference type="HOGENOM" id="CLU_139869_0_1_5"/>
<dbReference type="OrthoDB" id="9810484at2"/>
<dbReference type="GO" id="GO:0005737">
    <property type="term" value="C:cytoplasm"/>
    <property type="evidence" value="ECO:0007669"/>
    <property type="project" value="UniProtKB-ARBA"/>
</dbReference>
<dbReference type="GO" id="GO:0015935">
    <property type="term" value="C:small ribosomal subunit"/>
    <property type="evidence" value="ECO:0007669"/>
    <property type="project" value="TreeGrafter"/>
</dbReference>
<dbReference type="GO" id="GO:0019843">
    <property type="term" value="F:rRNA binding"/>
    <property type="evidence" value="ECO:0007669"/>
    <property type="project" value="UniProtKB-UniRule"/>
</dbReference>
<dbReference type="GO" id="GO:0003735">
    <property type="term" value="F:structural constituent of ribosome"/>
    <property type="evidence" value="ECO:0007669"/>
    <property type="project" value="InterPro"/>
</dbReference>
<dbReference type="GO" id="GO:0006412">
    <property type="term" value="P:translation"/>
    <property type="evidence" value="ECO:0007669"/>
    <property type="project" value="UniProtKB-UniRule"/>
</dbReference>
<dbReference type="FunFam" id="1.10.287.1480:FF:000001">
    <property type="entry name" value="30S ribosomal protein S14"/>
    <property type="match status" value="1"/>
</dbReference>
<dbReference type="Gene3D" id="1.10.287.1480">
    <property type="match status" value="1"/>
</dbReference>
<dbReference type="HAMAP" id="MF_00537">
    <property type="entry name" value="Ribosomal_uS14_1"/>
    <property type="match status" value="1"/>
</dbReference>
<dbReference type="InterPro" id="IPR001209">
    <property type="entry name" value="Ribosomal_uS14"/>
</dbReference>
<dbReference type="InterPro" id="IPR023036">
    <property type="entry name" value="Ribosomal_uS14_bac/plastid"/>
</dbReference>
<dbReference type="NCBIfam" id="NF006477">
    <property type="entry name" value="PRK08881.1"/>
    <property type="match status" value="1"/>
</dbReference>
<dbReference type="PANTHER" id="PTHR19836">
    <property type="entry name" value="30S RIBOSOMAL PROTEIN S14"/>
    <property type="match status" value="1"/>
</dbReference>
<dbReference type="PANTHER" id="PTHR19836:SF19">
    <property type="entry name" value="SMALL RIBOSOMAL SUBUNIT PROTEIN US14M"/>
    <property type="match status" value="1"/>
</dbReference>
<dbReference type="Pfam" id="PF00253">
    <property type="entry name" value="Ribosomal_S14"/>
    <property type="match status" value="1"/>
</dbReference>
<dbReference type="SUPFAM" id="SSF57716">
    <property type="entry name" value="Glucocorticoid receptor-like (DNA-binding domain)"/>
    <property type="match status" value="1"/>
</dbReference>
<sequence>MAKKSSIEKNNRRKKMAKNAAPKRERLKAIIADRSKPMEERFAATLKLAEMPRNSSITRVRNRCELTGRARAVYRKNKLSRIAIRDLGSRGLVPGLVKSSW</sequence>
<proteinExistence type="inferred from homology"/>
<keyword id="KW-0687">Ribonucleoprotein</keyword>
<keyword id="KW-0689">Ribosomal protein</keyword>
<keyword id="KW-0694">RNA-binding</keyword>
<keyword id="KW-0699">rRNA-binding</keyword>
<feature type="chain" id="PRO_1000128539" description="Small ribosomal subunit protein uS14">
    <location>
        <begin position="1"/>
        <end position="101"/>
    </location>
</feature>
<feature type="region of interest" description="Disordered" evidence="2">
    <location>
        <begin position="1"/>
        <end position="25"/>
    </location>
</feature>
<feature type="compositionally biased region" description="Basic and acidic residues" evidence="2">
    <location>
        <begin position="1"/>
        <end position="10"/>
    </location>
</feature>
<protein>
    <recommendedName>
        <fullName evidence="1">Small ribosomal subunit protein uS14</fullName>
    </recommendedName>
    <alternativeName>
        <fullName evidence="3">30S ribosomal protein S14</fullName>
    </alternativeName>
</protein>
<gene>
    <name evidence="1" type="primary">rpsN</name>
    <name type="ordered locus">RPE_3573</name>
</gene>
<name>RS14_RHOP5</name>
<organism>
    <name type="scientific">Rhodopseudomonas palustris (strain BisA53)</name>
    <dbReference type="NCBI Taxonomy" id="316055"/>
    <lineage>
        <taxon>Bacteria</taxon>
        <taxon>Pseudomonadati</taxon>
        <taxon>Pseudomonadota</taxon>
        <taxon>Alphaproteobacteria</taxon>
        <taxon>Hyphomicrobiales</taxon>
        <taxon>Nitrobacteraceae</taxon>
        <taxon>Rhodopseudomonas</taxon>
    </lineage>
</organism>
<reference key="1">
    <citation type="submission" date="2006-09" db="EMBL/GenBank/DDBJ databases">
        <title>Complete sequence of Rhodopseudomonas palustris BisA53.</title>
        <authorList>
            <consortium name="US DOE Joint Genome Institute"/>
            <person name="Copeland A."/>
            <person name="Lucas S."/>
            <person name="Lapidus A."/>
            <person name="Barry K."/>
            <person name="Detter J.C."/>
            <person name="Glavina del Rio T."/>
            <person name="Hammon N."/>
            <person name="Israni S."/>
            <person name="Dalin E."/>
            <person name="Tice H."/>
            <person name="Pitluck S."/>
            <person name="Chain P."/>
            <person name="Malfatti S."/>
            <person name="Shin M."/>
            <person name="Vergez L."/>
            <person name="Schmutz J."/>
            <person name="Larimer F."/>
            <person name="Land M."/>
            <person name="Hauser L."/>
            <person name="Pelletier D.A."/>
            <person name="Kyrpides N."/>
            <person name="Kim E."/>
            <person name="Harwood C.S."/>
            <person name="Oda Y."/>
            <person name="Richardson P."/>
        </authorList>
    </citation>
    <scope>NUCLEOTIDE SEQUENCE [LARGE SCALE GENOMIC DNA]</scope>
    <source>
        <strain>BisA53</strain>
    </source>
</reference>
<accession>Q07KN1</accession>
<evidence type="ECO:0000255" key="1">
    <source>
        <dbReference type="HAMAP-Rule" id="MF_00537"/>
    </source>
</evidence>
<evidence type="ECO:0000256" key="2">
    <source>
        <dbReference type="SAM" id="MobiDB-lite"/>
    </source>
</evidence>
<evidence type="ECO:0000305" key="3"/>
<comment type="function">
    <text evidence="1">Binds 16S rRNA, required for the assembly of 30S particles and may also be responsible for determining the conformation of the 16S rRNA at the A site.</text>
</comment>
<comment type="subunit">
    <text evidence="1">Part of the 30S ribosomal subunit. Contacts proteins S3 and S10.</text>
</comment>
<comment type="similarity">
    <text evidence="1">Belongs to the universal ribosomal protein uS14 family.</text>
</comment>